<evidence type="ECO:0000255" key="1"/>
<evidence type="ECO:0000255" key="2">
    <source>
        <dbReference type="PROSITE-ProRule" id="PRU00405"/>
    </source>
</evidence>
<evidence type="ECO:0000269" key="3">
    <source>
    </source>
</evidence>
<evidence type="ECO:0000269" key="4">
    <source>
    </source>
</evidence>
<evidence type="ECO:0000269" key="5">
    <source>
    </source>
</evidence>
<evidence type="ECO:0000303" key="6">
    <source>
    </source>
</evidence>
<evidence type="ECO:0000303" key="7">
    <source>
    </source>
</evidence>
<evidence type="ECO:0000303" key="8">
    <source>
    </source>
</evidence>
<evidence type="ECO:0000305" key="9"/>
<evidence type="ECO:0000312" key="10">
    <source>
        <dbReference type="Araport" id="AT1G30010"/>
    </source>
</evidence>
<evidence type="ECO:0000312" key="11">
    <source>
        <dbReference type="EMBL" id="AAG52062.1"/>
    </source>
</evidence>
<keyword id="KW-0255">Endonuclease</keyword>
<keyword id="KW-0378">Hydrolase</keyword>
<keyword id="KW-0404">Intron homing</keyword>
<keyword id="KW-0496">Mitochondrion</keyword>
<keyword id="KW-0540">Nuclease</keyword>
<keyword id="KW-1185">Reference proteome</keyword>
<keyword id="KW-0346">Stress response</keyword>
<keyword id="KW-0809">Transit peptide</keyword>
<feature type="transit peptide" description="Mitochondrion" evidence="1">
    <location>
        <begin position="1"/>
        <end status="unknown"/>
    </location>
</feature>
<feature type="chain" id="PRO_0000440119" description="Nuclear intron maturase 1, mitochondrial">
    <location>
        <begin status="unknown"/>
        <end position="711"/>
    </location>
</feature>
<feature type="domain" description="Reverse transcriptase" evidence="2">
    <location>
        <begin position="147"/>
        <end position="459"/>
    </location>
</feature>
<feature type="region of interest" description="Intron maturase type-2" evidence="1">
    <location>
        <begin position="484"/>
        <end position="653"/>
    </location>
</feature>
<reference key="1">
    <citation type="journal article" date="2000" name="Nature">
        <title>Sequence and analysis of chromosome 1 of the plant Arabidopsis thaliana.</title>
        <authorList>
            <person name="Theologis A."/>
            <person name="Ecker J.R."/>
            <person name="Palm C.J."/>
            <person name="Federspiel N.A."/>
            <person name="Kaul S."/>
            <person name="White O."/>
            <person name="Alonso J."/>
            <person name="Altafi H."/>
            <person name="Araujo R."/>
            <person name="Bowman C.L."/>
            <person name="Brooks S.Y."/>
            <person name="Buehler E."/>
            <person name="Chan A."/>
            <person name="Chao Q."/>
            <person name="Chen H."/>
            <person name="Cheuk R.F."/>
            <person name="Chin C.W."/>
            <person name="Chung M.K."/>
            <person name="Conn L."/>
            <person name="Conway A.B."/>
            <person name="Conway A.R."/>
            <person name="Creasy T.H."/>
            <person name="Dewar K."/>
            <person name="Dunn P."/>
            <person name="Etgu P."/>
            <person name="Feldblyum T.V."/>
            <person name="Feng J.-D."/>
            <person name="Fong B."/>
            <person name="Fujii C.Y."/>
            <person name="Gill J.E."/>
            <person name="Goldsmith A.D."/>
            <person name="Haas B."/>
            <person name="Hansen N.F."/>
            <person name="Hughes B."/>
            <person name="Huizar L."/>
            <person name="Hunter J.L."/>
            <person name="Jenkins J."/>
            <person name="Johnson-Hopson C."/>
            <person name="Khan S."/>
            <person name="Khaykin E."/>
            <person name="Kim C.J."/>
            <person name="Koo H.L."/>
            <person name="Kremenetskaia I."/>
            <person name="Kurtz D.B."/>
            <person name="Kwan A."/>
            <person name="Lam B."/>
            <person name="Langin-Hooper S."/>
            <person name="Lee A."/>
            <person name="Lee J.M."/>
            <person name="Lenz C.A."/>
            <person name="Li J.H."/>
            <person name="Li Y.-P."/>
            <person name="Lin X."/>
            <person name="Liu S.X."/>
            <person name="Liu Z.A."/>
            <person name="Luros J.S."/>
            <person name="Maiti R."/>
            <person name="Marziali A."/>
            <person name="Militscher J."/>
            <person name="Miranda M."/>
            <person name="Nguyen M."/>
            <person name="Nierman W.C."/>
            <person name="Osborne B.I."/>
            <person name="Pai G."/>
            <person name="Peterson J."/>
            <person name="Pham P.K."/>
            <person name="Rizzo M."/>
            <person name="Rooney T."/>
            <person name="Rowley D."/>
            <person name="Sakano H."/>
            <person name="Salzberg S.L."/>
            <person name="Schwartz J.R."/>
            <person name="Shinn P."/>
            <person name="Southwick A.M."/>
            <person name="Sun H."/>
            <person name="Tallon L.J."/>
            <person name="Tambunga G."/>
            <person name="Toriumi M.J."/>
            <person name="Town C.D."/>
            <person name="Utterback T."/>
            <person name="Van Aken S."/>
            <person name="Vaysberg M."/>
            <person name="Vysotskaia V.S."/>
            <person name="Walker M."/>
            <person name="Wu D."/>
            <person name="Yu G."/>
            <person name="Fraser C.M."/>
            <person name="Venter J.C."/>
            <person name="Davis R.W."/>
        </authorList>
    </citation>
    <scope>NUCLEOTIDE SEQUENCE [LARGE SCALE GENOMIC DNA]</scope>
    <source>
        <strain>cv. Columbia</strain>
    </source>
</reference>
<reference key="2">
    <citation type="journal article" date="2017" name="Plant J.">
        <title>Araport11: a complete reannotation of the Arabidopsis thaliana reference genome.</title>
        <authorList>
            <person name="Cheng C.Y."/>
            <person name="Krishnakumar V."/>
            <person name="Chan A.P."/>
            <person name="Thibaud-Nissen F."/>
            <person name="Schobel S."/>
            <person name="Town C.D."/>
        </authorList>
    </citation>
    <scope>GENOME REANNOTATION</scope>
    <source>
        <strain>cv. Columbia</strain>
    </source>
</reference>
<reference key="3">
    <citation type="journal article" date="2003" name="Nucleic Acids Res.">
        <title>Putative proteins related to group II intron reverse transcriptase/maturases are encoded by nuclear genes in higher plants.</title>
        <authorList>
            <person name="Mohr G."/>
            <person name="Lambowitz A.M."/>
        </authorList>
    </citation>
    <scope>GENE FAMILY</scope>
</reference>
<reference key="4">
    <citation type="journal article" date="2006" name="Plant Cell Physiol.">
        <title>A mutation in At-nMat1a, which encodes a nuclear gene having high similarity to group II intron maturase, causes impaired splicing of mitochondrial NAD4 transcript and altered carbon metabolism in Arabidopsis thaliana.</title>
        <authorList>
            <person name="Nakagawa N."/>
            <person name="Sakurai N."/>
        </authorList>
    </citation>
    <scope>FUNCTION</scope>
    <scope>DISRUPTION PHENOTYPE</scope>
    <scope>TISSUE SPECIFICITY</scope>
    <source>
        <strain>cv. Columbia</strain>
    </source>
</reference>
<reference key="5">
    <citation type="journal article" date="2007" name="Mol. Cell. Proteomics">
        <title>Multidimensional protein identification technology (MudPIT) analysis of ubiquitinated proteins in plants.</title>
        <authorList>
            <person name="Maor R."/>
            <person name="Jones A."/>
            <person name="Nuehse T.S."/>
            <person name="Studholme D.J."/>
            <person name="Peck S.C."/>
            <person name="Shirasu K."/>
        </authorList>
    </citation>
    <scope>IDENTIFICATION BY MASS SPECTROMETRY [LARGE SCALE ANALYSIS]</scope>
    <source>
        <strain>cv. Landsberg erecta</strain>
    </source>
</reference>
<reference key="6">
    <citation type="journal article" date="2009" name="RNA">
        <title>AtnMat2, a nuclear-encoded maturase required for splicing of group-II introns in Arabidopsis mitochondria.</title>
        <authorList>
            <person name="Keren I."/>
            <person name="Bezawork-Geleta A."/>
            <person name="Kolton M."/>
            <person name="Maayan I."/>
            <person name="Belausov E."/>
            <person name="Levy M."/>
            <person name="Mett A."/>
            <person name="Gidoni D."/>
            <person name="Shaya F."/>
            <person name="Ostersetzer-Biran O."/>
        </authorList>
    </citation>
    <scope>SUBCELLULAR LOCATION</scope>
    <scope>GENE FAMILY</scope>
    <scope>NOMENCLATURE</scope>
    <source>
        <strain>cv. Columbia</strain>
    </source>
</reference>
<reference key="7">
    <citation type="journal article" date="2012" name="Plant J.">
        <title>nMAT1, a nuclear-encoded maturase involved in the trans-splicing of nad1 intron 1, is essential for mitochondrial complex I assembly and function.</title>
        <authorList>
            <person name="Keren I."/>
            <person name="Tal L."/>
            <person name="des Francs-Small C.C."/>
            <person name="Araujo W.L."/>
            <person name="Shevtsov S."/>
            <person name="Shaya F."/>
            <person name="Fernie A.R."/>
            <person name="Small I."/>
            <person name="Ostersetzer-Biran O."/>
        </authorList>
    </citation>
    <scope>FUNCTION</scope>
    <scope>DISRUPTION PHENOTYPE</scope>
    <source>
        <strain>cv. Columbia</strain>
    </source>
</reference>
<reference key="8">
    <citation type="journal article" date="2014" name="Front. Plant Sci.">
        <title>Group II intron splicing factors in plant mitochondria.</title>
        <authorList>
            <person name="Brown G.G."/>
            <person name="Colas des Francs-Small C."/>
            <person name="Ostersetzer-Biran O."/>
        </authorList>
    </citation>
    <scope>REVIEW ON SPLICING FACTORS</scope>
    <source>
        <strain>cv. Columbia</strain>
    </source>
</reference>
<gene>
    <name evidence="8" type="primary">NMAT1</name>
    <name evidence="7" type="synonym">CSS1</name>
    <name evidence="6" type="synonym">NMAT1A</name>
    <name evidence="10" type="ordered locus">At1g30010</name>
    <name evidence="11" type="ORF">T1P2.4</name>
</gene>
<sequence length="711" mass="81537">MKRLTYPLSSLRNIVEHFHCNTFHKPISSLSISPTLKSESREPSSTQDPYSLLKQDPVDICLSLWVKSFSSPPSATFSNLTGFLSKFDLWVLAYQRTCAHVTGTFPPRNAIHANALRSLLSLQNAVTRSGGKFRWNDKMNQYVRSPKDKISMNGGEGMSKGKVRRIIESEEPIFQDRVVHEVLLMILEPFFEARFSSKSHGFRPGRNPHTVIRTIRSNFAGYLWFMKGDVSEMLDHVDVDVVMNCLQKVVKDRKVLGLIESSLKFSDKRVLKRVVEKHGNDNGLGTKRRIEREKRNKTKKKILSDDEPKPDPYWLRTFYSFAPKEAAKVPSYGYCGVLSPLLANVCLNELDRFMETKIVEYFSPCKDDSIWKESIEDGCHNPAWPEFVPSSGKEKTRKMDYIRYGGHFLIGIRGPREDAVKMRKEIIDFCDRVFGVRLDNSKLEIEHISRGIQFLDHIICRRVIYPTLRYTGSGGSIVSKKGVGTLLSVSASLEQCIRQFRRLAFVKGDKDPEPLPCNPMLYSSQSHSNSQMNKFLETMADWYKYADNRKKAVGFCAYVIRSSLAKLYAARYRLKSRAKVYSIASRDLSHPLSESSNNSAPEYSDLLRMGLVDAIEGVQFSRMSLIPSCDYTPFPRNWIPNHEQVLQEYIRLQDPKFFCGLHRSIKREGLTLPQDEISEAVWDFKTLGAWRSKYENKREADDGLQKLDSQT</sequence>
<name>NMAT1_ARATH</name>
<comment type="function">
    <text evidence="3 5">Nuclear-encoded maturase required for splicing of group-II introns in mitochondria (PubMed:16621844, PubMed:22429648). Necessary for mitochondrial biogenesis during early developmental stages (PubMed:22429648). Involved in the splicing of mitochondrial NAD4 transcripts (PubMed:16621844). Required for trans-splicing of NAD1 intron 1 and also functions in cis-splicing of NAD2 intron 1 and NAD4 intron 2 (PubMed:22429648). Required for the regulation of fundamental metabolic pathways such as amino acid metabolism, triacylglycerol degradation and polysaccharide synthesis (cellulose and starch) during the early stage of plant growth (PubMed:16621844). Implicated in stress responses (PubMed:22429648).</text>
</comment>
<comment type="subcellular location">
    <subcellularLocation>
        <location evidence="4">Mitochondrion</location>
    </subcellularLocation>
</comment>
<comment type="tissue specificity">
    <text evidence="3">Expressed at low levels in seedlings and accumulates in adult plants.</text>
</comment>
<comment type="disruption phenotype">
    <text evidence="3 5">Slightly slower growth rate. Impaired splicing of mitochondrial group-II introns-containing NAD4 transcript and altered carbon metabolism. Altered fundamental metabolic pathways including amino acid metabolism, triacylglycerol degradation and polysaccharide synthesis (cellulose and starch) during the early stage of plant growth. Reduced sensitivity to 2,6-dichlorobenzonitrile (DCB) and isoxaben treatments, cellulose biosynthesis inhibitors. Increased sensitivity to sugar concentration of the medium (PubMed:16621844). Retarded growth and developmental phenotypes (e.g. reduced germination efficiency, altered primary root elongation and impaired vegetative growth and fertility) and modified respiration activities. Altered stress responses characterized by high levels accumulation of reactive oxygen species (ROS) and darker and reddish leaves. Abnormal mitochondrial morphology (PubMed:22429648).</text>
</comment>
<comment type="similarity">
    <text evidence="9">Belongs to the plant nuclear intron maturase (nMat) family.</text>
</comment>
<protein>
    <recommendedName>
        <fullName evidence="8">Nuclear intron maturase 1, mitochondrial</fullName>
        <shortName evidence="8">AtnMat1</shortName>
        <ecNumber>3.1.-.-</ecNumber>
    </recommendedName>
    <alternativeName>
        <fullName evidence="6">Nuclear intron maturase 1 a</fullName>
        <shortName evidence="6">AtnMat1a</shortName>
    </alternativeName>
    <alternativeName>
        <fullName evidence="7">Protein CHANGED SENSITIVITY TO CELLULOSE SYNTHESIS INHIBITORS 1</fullName>
    </alternativeName>
</protein>
<accession>Q9C8R8</accession>
<proteinExistence type="evidence at protein level"/>
<dbReference type="EC" id="3.1.-.-"/>
<dbReference type="EMBL" id="AC022455">
    <property type="protein sequence ID" value="AAG52062.1"/>
    <property type="molecule type" value="Genomic_DNA"/>
</dbReference>
<dbReference type="EMBL" id="CP002684">
    <property type="protein sequence ID" value="AEE31167.1"/>
    <property type="molecule type" value="Genomic_DNA"/>
</dbReference>
<dbReference type="PIR" id="A86424">
    <property type="entry name" value="A86424"/>
</dbReference>
<dbReference type="RefSeq" id="NP_174294.1">
    <property type="nucleotide sequence ID" value="NM_102741.3"/>
</dbReference>
<dbReference type="FunCoup" id="Q9C8R8">
    <property type="interactions" value="132"/>
</dbReference>
<dbReference type="STRING" id="3702.Q9C8R8"/>
<dbReference type="iPTMnet" id="Q9C8R8"/>
<dbReference type="PaxDb" id="3702-AT1G30010.1"/>
<dbReference type="ProteomicsDB" id="251117"/>
<dbReference type="EnsemblPlants" id="AT1G30010.1">
    <property type="protein sequence ID" value="AT1G30010.1"/>
    <property type="gene ID" value="AT1G30010"/>
</dbReference>
<dbReference type="GeneID" id="839880"/>
<dbReference type="Gramene" id="AT1G30010.1">
    <property type="protein sequence ID" value="AT1G30010.1"/>
    <property type="gene ID" value="AT1G30010"/>
</dbReference>
<dbReference type="KEGG" id="ath:AT1G30010"/>
<dbReference type="Araport" id="AT1G30010"/>
<dbReference type="TAIR" id="AT1G30010">
    <property type="gene designation" value="NMAT1"/>
</dbReference>
<dbReference type="eggNOG" id="KOG1075">
    <property type="taxonomic scope" value="Eukaryota"/>
</dbReference>
<dbReference type="HOGENOM" id="CLU_009993_1_0_1"/>
<dbReference type="InParanoid" id="Q9C8R8"/>
<dbReference type="OMA" id="CFQDRVV"/>
<dbReference type="PhylomeDB" id="Q9C8R8"/>
<dbReference type="PRO" id="PR:Q9C8R8"/>
<dbReference type="Proteomes" id="UP000006548">
    <property type="component" value="Chromosome 1"/>
</dbReference>
<dbReference type="ExpressionAtlas" id="Q9C8R8">
    <property type="expression patterns" value="baseline and differential"/>
</dbReference>
<dbReference type="GO" id="GO:0005739">
    <property type="term" value="C:mitochondrion"/>
    <property type="evidence" value="ECO:0000314"/>
    <property type="project" value="UniProtKB"/>
</dbReference>
<dbReference type="GO" id="GO:0004519">
    <property type="term" value="F:endonuclease activity"/>
    <property type="evidence" value="ECO:0007669"/>
    <property type="project" value="UniProtKB-KW"/>
</dbReference>
<dbReference type="GO" id="GO:0000373">
    <property type="term" value="P:Group II intron splicing"/>
    <property type="evidence" value="ECO:0000315"/>
    <property type="project" value="UniProtKB"/>
</dbReference>
<dbReference type="GO" id="GO:0000374">
    <property type="term" value="P:Group III intron splicing"/>
    <property type="evidence" value="ECO:0000315"/>
    <property type="project" value="TAIR"/>
</dbReference>
<dbReference type="GO" id="GO:0006314">
    <property type="term" value="P:intron homing"/>
    <property type="evidence" value="ECO:0007669"/>
    <property type="project" value="UniProtKB-KW"/>
</dbReference>
<dbReference type="GO" id="GO:0090615">
    <property type="term" value="P:mitochondrial mRNA processing"/>
    <property type="evidence" value="ECO:0000315"/>
    <property type="project" value="UniProtKB"/>
</dbReference>
<dbReference type="GO" id="GO:0007005">
    <property type="term" value="P:mitochondrion organization"/>
    <property type="evidence" value="ECO:0000315"/>
    <property type="project" value="UniProtKB"/>
</dbReference>
<dbReference type="GO" id="GO:0006521">
    <property type="term" value="P:regulation of amino acid metabolic process"/>
    <property type="evidence" value="ECO:0000315"/>
    <property type="project" value="UniProtKB"/>
</dbReference>
<dbReference type="GO" id="GO:2001006">
    <property type="term" value="P:regulation of cellulose biosynthetic process"/>
    <property type="evidence" value="ECO:0000315"/>
    <property type="project" value="UniProtKB"/>
</dbReference>
<dbReference type="GO" id="GO:0032885">
    <property type="term" value="P:regulation of polysaccharide biosynthetic process"/>
    <property type="evidence" value="ECO:0000315"/>
    <property type="project" value="UniProtKB"/>
</dbReference>
<dbReference type="GO" id="GO:0010896">
    <property type="term" value="P:regulation of triglyceride catabolic process"/>
    <property type="evidence" value="ECO:0000315"/>
    <property type="project" value="UniProtKB"/>
</dbReference>
<dbReference type="GO" id="GO:0009845">
    <property type="term" value="P:seed germination"/>
    <property type="evidence" value="ECO:0000315"/>
    <property type="project" value="TAIR"/>
</dbReference>
<dbReference type="GO" id="GO:0090351">
    <property type="term" value="P:seedling development"/>
    <property type="evidence" value="ECO:0000315"/>
    <property type="project" value="TAIR"/>
</dbReference>
<dbReference type="GO" id="GO:0010228">
    <property type="term" value="P:vegetative to reproductive phase transition of meristem"/>
    <property type="evidence" value="ECO:0000315"/>
    <property type="project" value="TAIR"/>
</dbReference>
<dbReference type="CDD" id="cd01651">
    <property type="entry name" value="RT_G2_intron"/>
    <property type="match status" value="1"/>
</dbReference>
<dbReference type="InterPro" id="IPR043502">
    <property type="entry name" value="DNA/RNA_pol_sf"/>
</dbReference>
<dbReference type="InterPro" id="IPR024937">
    <property type="entry name" value="Domain_X"/>
</dbReference>
<dbReference type="InterPro" id="IPR051083">
    <property type="entry name" value="GrpII_Intron_Splice-Mob/Def"/>
</dbReference>
<dbReference type="PANTHER" id="PTHR34047:SF2">
    <property type="entry name" value="NUCLEAR INTRON MATURASE 1, MITOCHONDRIAL"/>
    <property type="match status" value="1"/>
</dbReference>
<dbReference type="PANTHER" id="PTHR34047">
    <property type="entry name" value="NUCLEAR INTRON MATURASE 1, MITOCHONDRIAL-RELATED"/>
    <property type="match status" value="1"/>
</dbReference>
<dbReference type="Pfam" id="PF01348">
    <property type="entry name" value="Intron_maturas2"/>
    <property type="match status" value="1"/>
</dbReference>
<dbReference type="SUPFAM" id="SSF56672">
    <property type="entry name" value="DNA/RNA polymerases"/>
    <property type="match status" value="1"/>
</dbReference>
<organism>
    <name type="scientific">Arabidopsis thaliana</name>
    <name type="common">Mouse-ear cress</name>
    <dbReference type="NCBI Taxonomy" id="3702"/>
    <lineage>
        <taxon>Eukaryota</taxon>
        <taxon>Viridiplantae</taxon>
        <taxon>Streptophyta</taxon>
        <taxon>Embryophyta</taxon>
        <taxon>Tracheophyta</taxon>
        <taxon>Spermatophyta</taxon>
        <taxon>Magnoliopsida</taxon>
        <taxon>eudicotyledons</taxon>
        <taxon>Gunneridae</taxon>
        <taxon>Pentapetalae</taxon>
        <taxon>rosids</taxon>
        <taxon>malvids</taxon>
        <taxon>Brassicales</taxon>
        <taxon>Brassicaceae</taxon>
        <taxon>Camelineae</taxon>
        <taxon>Arabidopsis</taxon>
    </lineage>
</organism>